<feature type="chain" id="PRO_0000179433" description="Trigger factor">
    <location>
        <begin position="1"/>
        <end position="427"/>
    </location>
</feature>
<feature type="domain" description="PPIase FKBP-type" evidence="1">
    <location>
        <begin position="163"/>
        <end position="248"/>
    </location>
</feature>
<accession>Q8E7Q0</accession>
<sequence length="427" mass="46995">MSTSFENKATNRGIITFTISQDEIKPALDQAFNKVKKDLNVPGFRKGHMPRTVFNQKFGEEALYENALNLVLPKAYEAAVAELGLDVVAQPKIDVVSMEKGQDWKLTAEVVTKPEVKLGDYKDLSVEVDASKEVSAEEVDAKVERERNNLAELTVKDGEAAQGDTVVIDFVGSVDGVEFDGGKGDNFSLELGSGQFIPGFEEQLVGSKAGQTVDVNVTFPEDYQAEDLAGKDAKFVTTIHEVKTKEVPALDDELAKDIDDEVETLDELKAKYRKELESAKEIAFDDAVEGAAIELAVANAEIVELPEEMVHDEVHRAMNEFMGNMQRQGISPEMYFQLTGTTEEDLHKQYQADADKRVKTNLVIEAIAAAEGFEATDEEIEKEITDLASEYNMEADQVRGLLSADMLKHDIAMKKAVDVITSSATVK</sequence>
<comment type="function">
    <text evidence="1">Involved in protein export. Acts as a chaperone by maintaining the newly synthesized protein in an open conformation. Functions as a peptidyl-prolyl cis-trans isomerase.</text>
</comment>
<comment type="catalytic activity">
    <reaction evidence="1">
        <text>[protein]-peptidylproline (omega=180) = [protein]-peptidylproline (omega=0)</text>
        <dbReference type="Rhea" id="RHEA:16237"/>
        <dbReference type="Rhea" id="RHEA-COMP:10747"/>
        <dbReference type="Rhea" id="RHEA-COMP:10748"/>
        <dbReference type="ChEBI" id="CHEBI:83833"/>
        <dbReference type="ChEBI" id="CHEBI:83834"/>
        <dbReference type="EC" id="5.2.1.8"/>
    </reaction>
</comment>
<comment type="subcellular location">
    <subcellularLocation>
        <location>Cytoplasm</location>
    </subcellularLocation>
    <text evidence="1">About half TF is bound to the ribosome near the polypeptide exit tunnel while the other half is free in the cytoplasm.</text>
</comment>
<comment type="domain">
    <text evidence="1">Consists of 3 domains; the N-terminus binds the ribosome, the middle domain has PPIase activity, while the C-terminus has intrinsic chaperone activity on its own.</text>
</comment>
<comment type="similarity">
    <text evidence="1">Belongs to the FKBP-type PPIase family. Tig subfamily.</text>
</comment>
<protein>
    <recommendedName>
        <fullName evidence="1">Trigger factor</fullName>
        <shortName evidence="1">TF</shortName>
        <ecNumber evidence="1">5.2.1.8</ecNumber>
    </recommendedName>
    <alternativeName>
        <fullName evidence="1">PPIase</fullName>
    </alternativeName>
</protein>
<name>TIG_STRA3</name>
<evidence type="ECO:0000255" key="1">
    <source>
        <dbReference type="HAMAP-Rule" id="MF_00303"/>
    </source>
</evidence>
<organism>
    <name type="scientific">Streptococcus agalactiae serotype III (strain NEM316)</name>
    <dbReference type="NCBI Taxonomy" id="211110"/>
    <lineage>
        <taxon>Bacteria</taxon>
        <taxon>Bacillati</taxon>
        <taxon>Bacillota</taxon>
        <taxon>Bacilli</taxon>
        <taxon>Lactobacillales</taxon>
        <taxon>Streptococcaceae</taxon>
        <taxon>Streptococcus</taxon>
    </lineage>
</organism>
<reference key="1">
    <citation type="journal article" date="2002" name="Mol. Microbiol.">
        <title>Genome sequence of Streptococcus agalactiae, a pathogen causing invasive neonatal disease.</title>
        <authorList>
            <person name="Glaser P."/>
            <person name="Rusniok C."/>
            <person name="Buchrieser C."/>
            <person name="Chevalier F."/>
            <person name="Frangeul L."/>
            <person name="Msadek T."/>
            <person name="Zouine M."/>
            <person name="Couve E."/>
            <person name="Lalioui L."/>
            <person name="Poyart C."/>
            <person name="Trieu-Cuot P."/>
            <person name="Kunst F."/>
        </authorList>
    </citation>
    <scope>NUCLEOTIDE SEQUENCE [LARGE SCALE GENOMIC DNA]</scope>
    <source>
        <strain>NEM316</strain>
    </source>
</reference>
<keyword id="KW-0131">Cell cycle</keyword>
<keyword id="KW-0132">Cell division</keyword>
<keyword id="KW-0143">Chaperone</keyword>
<keyword id="KW-0963">Cytoplasm</keyword>
<keyword id="KW-0413">Isomerase</keyword>
<keyword id="KW-0697">Rotamase</keyword>
<gene>
    <name evidence="1" type="primary">tig</name>
    <name type="ordered locus">gbs0104</name>
</gene>
<proteinExistence type="inferred from homology"/>
<dbReference type="EC" id="5.2.1.8" evidence="1"/>
<dbReference type="EMBL" id="AL766843">
    <property type="protein sequence ID" value="CAD45749.1"/>
    <property type="molecule type" value="Genomic_DNA"/>
</dbReference>
<dbReference type="RefSeq" id="WP_000107749.1">
    <property type="nucleotide sequence ID" value="NC_004368.1"/>
</dbReference>
<dbReference type="SMR" id="Q8E7Q0"/>
<dbReference type="KEGG" id="san:gbs0104"/>
<dbReference type="eggNOG" id="COG0544">
    <property type="taxonomic scope" value="Bacteria"/>
</dbReference>
<dbReference type="HOGENOM" id="CLU_033058_3_2_9"/>
<dbReference type="Proteomes" id="UP000000823">
    <property type="component" value="Chromosome"/>
</dbReference>
<dbReference type="GO" id="GO:0005737">
    <property type="term" value="C:cytoplasm"/>
    <property type="evidence" value="ECO:0007669"/>
    <property type="project" value="UniProtKB-SubCell"/>
</dbReference>
<dbReference type="GO" id="GO:0003755">
    <property type="term" value="F:peptidyl-prolyl cis-trans isomerase activity"/>
    <property type="evidence" value="ECO:0007669"/>
    <property type="project" value="UniProtKB-UniRule"/>
</dbReference>
<dbReference type="GO" id="GO:0044183">
    <property type="term" value="F:protein folding chaperone"/>
    <property type="evidence" value="ECO:0007669"/>
    <property type="project" value="TreeGrafter"/>
</dbReference>
<dbReference type="GO" id="GO:0043022">
    <property type="term" value="F:ribosome binding"/>
    <property type="evidence" value="ECO:0007669"/>
    <property type="project" value="TreeGrafter"/>
</dbReference>
<dbReference type="GO" id="GO:0051083">
    <property type="term" value="P:'de novo' cotranslational protein folding"/>
    <property type="evidence" value="ECO:0007669"/>
    <property type="project" value="TreeGrafter"/>
</dbReference>
<dbReference type="GO" id="GO:0051301">
    <property type="term" value="P:cell division"/>
    <property type="evidence" value="ECO:0007669"/>
    <property type="project" value="UniProtKB-KW"/>
</dbReference>
<dbReference type="GO" id="GO:0061077">
    <property type="term" value="P:chaperone-mediated protein folding"/>
    <property type="evidence" value="ECO:0007669"/>
    <property type="project" value="TreeGrafter"/>
</dbReference>
<dbReference type="GO" id="GO:0015031">
    <property type="term" value="P:protein transport"/>
    <property type="evidence" value="ECO:0007669"/>
    <property type="project" value="UniProtKB-UniRule"/>
</dbReference>
<dbReference type="GO" id="GO:0043335">
    <property type="term" value="P:protein unfolding"/>
    <property type="evidence" value="ECO:0007669"/>
    <property type="project" value="TreeGrafter"/>
</dbReference>
<dbReference type="FunFam" id="3.10.50.40:FF:000001">
    <property type="entry name" value="Trigger factor"/>
    <property type="match status" value="1"/>
</dbReference>
<dbReference type="Gene3D" id="3.10.50.40">
    <property type="match status" value="1"/>
</dbReference>
<dbReference type="Gene3D" id="3.30.70.1050">
    <property type="entry name" value="Trigger factor ribosome-binding domain"/>
    <property type="match status" value="1"/>
</dbReference>
<dbReference type="Gene3D" id="1.10.3120.10">
    <property type="entry name" value="Trigger factor, C-terminal domain"/>
    <property type="match status" value="1"/>
</dbReference>
<dbReference type="HAMAP" id="MF_00303">
    <property type="entry name" value="Trigger_factor_Tig"/>
    <property type="match status" value="1"/>
</dbReference>
<dbReference type="InterPro" id="IPR046357">
    <property type="entry name" value="PPIase_dom_sf"/>
</dbReference>
<dbReference type="InterPro" id="IPR001179">
    <property type="entry name" value="PPIase_FKBP_dom"/>
</dbReference>
<dbReference type="InterPro" id="IPR005215">
    <property type="entry name" value="Trig_fac"/>
</dbReference>
<dbReference type="InterPro" id="IPR008880">
    <property type="entry name" value="Trigger_fac_C"/>
</dbReference>
<dbReference type="InterPro" id="IPR037041">
    <property type="entry name" value="Trigger_fac_C_sf"/>
</dbReference>
<dbReference type="InterPro" id="IPR008881">
    <property type="entry name" value="Trigger_fac_ribosome-bd_bac"/>
</dbReference>
<dbReference type="InterPro" id="IPR036611">
    <property type="entry name" value="Trigger_fac_ribosome-bd_sf"/>
</dbReference>
<dbReference type="InterPro" id="IPR027304">
    <property type="entry name" value="Trigger_fact/SurA_dom_sf"/>
</dbReference>
<dbReference type="NCBIfam" id="TIGR00115">
    <property type="entry name" value="tig"/>
    <property type="match status" value="1"/>
</dbReference>
<dbReference type="PANTHER" id="PTHR30560">
    <property type="entry name" value="TRIGGER FACTOR CHAPERONE AND PEPTIDYL-PROLYL CIS/TRANS ISOMERASE"/>
    <property type="match status" value="1"/>
</dbReference>
<dbReference type="PANTHER" id="PTHR30560:SF3">
    <property type="entry name" value="TRIGGER FACTOR-LIKE PROTEIN TIG, CHLOROPLASTIC"/>
    <property type="match status" value="1"/>
</dbReference>
<dbReference type="Pfam" id="PF00254">
    <property type="entry name" value="FKBP_C"/>
    <property type="match status" value="1"/>
</dbReference>
<dbReference type="Pfam" id="PF05698">
    <property type="entry name" value="Trigger_C"/>
    <property type="match status" value="1"/>
</dbReference>
<dbReference type="Pfam" id="PF05697">
    <property type="entry name" value="Trigger_N"/>
    <property type="match status" value="1"/>
</dbReference>
<dbReference type="PIRSF" id="PIRSF003095">
    <property type="entry name" value="Trigger_factor"/>
    <property type="match status" value="1"/>
</dbReference>
<dbReference type="SUPFAM" id="SSF54534">
    <property type="entry name" value="FKBP-like"/>
    <property type="match status" value="1"/>
</dbReference>
<dbReference type="SUPFAM" id="SSF109998">
    <property type="entry name" value="Triger factor/SurA peptide-binding domain-like"/>
    <property type="match status" value="1"/>
</dbReference>
<dbReference type="SUPFAM" id="SSF102735">
    <property type="entry name" value="Trigger factor ribosome-binding domain"/>
    <property type="match status" value="1"/>
</dbReference>
<dbReference type="PROSITE" id="PS50059">
    <property type="entry name" value="FKBP_PPIASE"/>
    <property type="match status" value="1"/>
</dbReference>